<dbReference type="EMBL" id="D70896">
    <property type="protein sequence ID" value="BAA23985.1"/>
    <property type="molecule type" value="Genomic_DNA"/>
</dbReference>
<dbReference type="PIR" id="A30221">
    <property type="entry name" value="A30221"/>
</dbReference>
<dbReference type="PIR" id="B30221">
    <property type="entry name" value="B30221"/>
</dbReference>
<dbReference type="RefSeq" id="NP_001026652.1">
    <property type="nucleotide sequence ID" value="NM_001031481.1"/>
</dbReference>
<dbReference type="SMR" id="Q9PSW9"/>
<dbReference type="FunCoup" id="Q9PSW9">
    <property type="interactions" value="725"/>
</dbReference>
<dbReference type="STRING" id="9031.ENSGALP00000056960"/>
<dbReference type="GlyCosmos" id="Q9PSW9">
    <property type="glycosylation" value="1 site, No reported glycans"/>
</dbReference>
<dbReference type="GlyGen" id="Q9PSW9">
    <property type="glycosylation" value="1 site"/>
</dbReference>
<dbReference type="iPTMnet" id="Q9PSW9"/>
<dbReference type="GeneID" id="427886"/>
<dbReference type="KEGG" id="gga:427886"/>
<dbReference type="CTD" id="427886"/>
<dbReference type="VEuPathDB" id="HostDB:geneid_427886"/>
<dbReference type="InParanoid" id="Q9PSW9"/>
<dbReference type="OMA" id="SSNAMRI"/>
<dbReference type="OrthoDB" id="9117938at2759"/>
<dbReference type="PhylomeDB" id="Q9PSW9"/>
<dbReference type="TreeFam" id="TF300212"/>
<dbReference type="Reactome" id="R-GGA-201722">
    <property type="pathway name" value="Formation of the beta-catenin:TCF transactivating complex"/>
</dbReference>
<dbReference type="Reactome" id="R-GGA-212300">
    <property type="pathway name" value="PRC2 methylates histones and DNA"/>
</dbReference>
<dbReference type="Reactome" id="R-GGA-2299718">
    <property type="pathway name" value="Condensation of Prophase Chromosomes"/>
</dbReference>
<dbReference type="Reactome" id="R-GGA-2559580">
    <property type="pathway name" value="Oxidative Stress Induced Senescence"/>
</dbReference>
<dbReference type="Reactome" id="R-GGA-3214815">
    <property type="pathway name" value="HDACs deacetylate histones"/>
</dbReference>
<dbReference type="Reactome" id="R-GGA-3214847">
    <property type="pathway name" value="HATs acetylate histones"/>
</dbReference>
<dbReference type="Reactome" id="R-GGA-5250924">
    <property type="pathway name" value="B-WICH complex positively regulates rRNA expression"/>
</dbReference>
<dbReference type="Reactome" id="R-GGA-5578749">
    <property type="pathway name" value="Transcriptional regulation by small RNAs"/>
</dbReference>
<dbReference type="Reactome" id="R-GGA-5625886">
    <property type="pathway name" value="Activated PKN1 stimulates transcription of AR (androgen receptor) regulated genes KLK2 and KLK3"/>
</dbReference>
<dbReference type="Reactome" id="R-GGA-5689880">
    <property type="pathway name" value="Ub-specific processing proteases"/>
</dbReference>
<dbReference type="Reactome" id="R-GGA-5693565">
    <property type="pathway name" value="Recruitment and ATM-mediated phosphorylation of repair and signaling proteins at DNA double strand breaks"/>
</dbReference>
<dbReference type="Reactome" id="R-GGA-5693571">
    <property type="pathway name" value="Nonhomologous End-Joining (NHEJ)"/>
</dbReference>
<dbReference type="Reactome" id="R-GGA-5693607">
    <property type="pathway name" value="Processing of DNA double-strand break ends"/>
</dbReference>
<dbReference type="Reactome" id="R-GGA-606279">
    <property type="pathway name" value="Deposition of new CENPA-containing nucleosomes at the centromere"/>
</dbReference>
<dbReference type="Reactome" id="R-GGA-68616">
    <property type="pathway name" value="Assembly of the ORC complex at the origin of replication"/>
</dbReference>
<dbReference type="Reactome" id="R-GGA-69473">
    <property type="pathway name" value="G2/M DNA damage checkpoint"/>
</dbReference>
<dbReference type="Reactome" id="R-GGA-73728">
    <property type="pathway name" value="RNA Polymerase I Promoter Opening"/>
</dbReference>
<dbReference type="Reactome" id="R-GGA-73772">
    <property type="pathway name" value="RNA Polymerase I Promoter Escape"/>
</dbReference>
<dbReference type="Reactome" id="R-GGA-8936459">
    <property type="pathway name" value="RUNX1 regulates genes involved in megakaryocyte differentiation and platelet function"/>
</dbReference>
<dbReference type="Reactome" id="R-GGA-9018519">
    <property type="pathway name" value="Estrogen-dependent gene expression"/>
</dbReference>
<dbReference type="Reactome" id="R-GGA-9841922">
    <property type="pathway name" value="MLL4 and MLL3 complexes regulate expression of PPARG target genes in adipogenesis and hepatic steatosis"/>
</dbReference>
<dbReference type="Reactome" id="R-GGA-9843940">
    <property type="pathway name" value="Regulation of endogenous retroelements by KRAB-ZFP proteins"/>
</dbReference>
<dbReference type="Reactome" id="R-GGA-9843970">
    <property type="pathway name" value="Regulation of endogenous retroelements by the Human Silencing Hub (HUSH) complex"/>
</dbReference>
<dbReference type="PRO" id="PR:Q9PSW9"/>
<dbReference type="Proteomes" id="UP000000539">
    <property type="component" value="Chromosome 1"/>
</dbReference>
<dbReference type="Bgee" id="ENSGALG00000049408">
    <property type="expression patterns" value="Expressed in testis and 13 other cell types or tissues"/>
</dbReference>
<dbReference type="GO" id="GO:0000786">
    <property type="term" value="C:nucleosome"/>
    <property type="evidence" value="ECO:0007669"/>
    <property type="project" value="UniProtKB-KW"/>
</dbReference>
<dbReference type="GO" id="GO:0005634">
    <property type="term" value="C:nucleus"/>
    <property type="evidence" value="ECO:0007669"/>
    <property type="project" value="UniProtKB-SubCell"/>
</dbReference>
<dbReference type="GO" id="GO:0003677">
    <property type="term" value="F:DNA binding"/>
    <property type="evidence" value="ECO:0007669"/>
    <property type="project" value="UniProtKB-KW"/>
</dbReference>
<dbReference type="GO" id="GO:0046982">
    <property type="term" value="F:protein heterodimerization activity"/>
    <property type="evidence" value="ECO:0007669"/>
    <property type="project" value="InterPro"/>
</dbReference>
<dbReference type="GO" id="GO:0030527">
    <property type="term" value="F:structural constituent of chromatin"/>
    <property type="evidence" value="ECO:0007669"/>
    <property type="project" value="InterPro"/>
</dbReference>
<dbReference type="CDD" id="cd22910">
    <property type="entry name" value="HFD_H2B"/>
    <property type="match status" value="1"/>
</dbReference>
<dbReference type="FunFam" id="1.10.20.10:FF:000003">
    <property type="entry name" value="Histone H2B"/>
    <property type="match status" value="1"/>
</dbReference>
<dbReference type="Gene3D" id="1.10.20.10">
    <property type="entry name" value="Histone, subunit A"/>
    <property type="match status" value="1"/>
</dbReference>
<dbReference type="InterPro" id="IPR009072">
    <property type="entry name" value="Histone-fold"/>
</dbReference>
<dbReference type="InterPro" id="IPR007125">
    <property type="entry name" value="Histone_H2A/H2B/H3"/>
</dbReference>
<dbReference type="InterPro" id="IPR000558">
    <property type="entry name" value="Histone_H2B"/>
</dbReference>
<dbReference type="InterPro" id="IPR055333">
    <property type="entry name" value="HISTONE_H2B_site"/>
</dbReference>
<dbReference type="PANTHER" id="PTHR23428">
    <property type="entry name" value="HISTONE H2B"/>
    <property type="match status" value="1"/>
</dbReference>
<dbReference type="Pfam" id="PF00125">
    <property type="entry name" value="Histone"/>
    <property type="match status" value="1"/>
</dbReference>
<dbReference type="PRINTS" id="PR00621">
    <property type="entry name" value="HISTONEH2B"/>
</dbReference>
<dbReference type="SMART" id="SM00427">
    <property type="entry name" value="H2B"/>
    <property type="match status" value="1"/>
</dbReference>
<dbReference type="SUPFAM" id="SSF47113">
    <property type="entry name" value="Histone-fold"/>
    <property type="match status" value="1"/>
</dbReference>
<dbReference type="PROSITE" id="PS00357">
    <property type="entry name" value="HISTONE_H2B"/>
    <property type="match status" value="1"/>
</dbReference>
<name>H2B8_CHICK</name>
<gene>
    <name type="primary">H2B-VIII</name>
</gene>
<sequence length="126" mass="13964">MPEPAKSAPAPKKGSKKAVTKTQKKGDKKRRKTRKESYSIYVYKVLKQVHPDTGISSKAMGIMNSFVNDIFERIAGEASRLAHYNKRSTITSREIQTAVRLLLPGELAKHAVSEGTKAVTKYTSSK</sequence>
<protein>
    <recommendedName>
        <fullName>Histone H2B 8</fullName>
    </recommendedName>
    <alternativeName>
        <fullName>H2B VIII</fullName>
    </alternativeName>
</protein>
<reference key="1">
    <citation type="journal article" date="1989" name="Mol. Cell. Biol.">
        <title>Expression of replication-dependent histone genes in avian spermatids involves an alternate pathway of mRNA 3'-end formation.</title>
        <authorList>
            <person name="Challoner P.B."/>
            <person name="Moss S.B."/>
            <person name="Groudine M."/>
        </authorList>
    </citation>
    <scope>NUCLEOTIDE SEQUENCE [MRNA]</scope>
</reference>
<reference key="2">
    <citation type="journal article" date="1996" name="DNA Res.">
        <title>Organization of the chicken histone genes in a major gene cluster and generation of an almost complete set of the core histone protein sequences.</title>
        <authorList>
            <person name="Takami Y."/>
            <person name="Higashio M."/>
            <person name="Fukuoka T."/>
            <person name="Takechi S."/>
            <person name="Nakayama T."/>
        </authorList>
    </citation>
    <scope>NUCLEOTIDE SEQUENCE [GENOMIC DNA]</scope>
    <scope>NOMENCLATURE</scope>
    <source>
        <strain>White leghorn</strain>
    </source>
</reference>
<reference key="3">
    <citation type="journal article" date="1989" name="Biochemistry">
        <title>Ubiquitinated histone H2B is preferentially located in transcriptionally active chromatin.</title>
        <authorList>
            <person name="Nickel B.E."/>
            <person name="Allis C.D."/>
            <person name="Davie J.R."/>
        </authorList>
    </citation>
    <scope>UBIQUITINATION</scope>
</reference>
<reference key="4">
    <citation type="journal article" date="2003" name="Cell">
        <title>Apoptotic phosphorylation of histone H2B is mediated by mammalian sterile twenty kinase.</title>
        <authorList>
            <person name="Cheung W.L."/>
            <person name="Ajiro K."/>
            <person name="Samejima K."/>
            <person name="Kloc M."/>
            <person name="Cheung P."/>
            <person name="Mizzen C.A."/>
            <person name="Beeser A."/>
            <person name="Etkin L.D."/>
            <person name="Chernoff J."/>
            <person name="Earnshaw W.C."/>
            <person name="Allis C.D."/>
        </authorList>
    </citation>
    <scope>PHOSPHORYLATION AT SER-15</scope>
</reference>
<reference key="5">
    <citation type="journal article" date="2003" name="J. Biol. Chem.">
        <title>Acetylation of histone H2B mirrors that of H4 and H3 at the chicken beta-globin locus but not at housekeeping genes.</title>
        <authorList>
            <person name="Myers F.A."/>
            <person name="Chong W."/>
            <person name="Evans D.R."/>
            <person name="Thorne A.W."/>
            <person name="Crane-Robinson C."/>
        </authorList>
    </citation>
    <scope>ACETYLATION AT LYS-6; LYS-13; LYS-16 AND LYS-21</scope>
</reference>
<proteinExistence type="evidence at protein level"/>
<evidence type="ECO:0000250" key="1"/>
<evidence type="ECO:0000250" key="2">
    <source>
        <dbReference type="UniProtKB" id="P33778"/>
    </source>
</evidence>
<evidence type="ECO:0000250" key="3">
    <source>
        <dbReference type="UniProtKB" id="P62807"/>
    </source>
</evidence>
<evidence type="ECO:0000256" key="4">
    <source>
        <dbReference type="SAM" id="MobiDB-lite"/>
    </source>
</evidence>
<evidence type="ECO:0000269" key="5">
    <source>
    </source>
</evidence>
<evidence type="ECO:0000269" key="6">
    <source>
    </source>
</evidence>
<evidence type="ECO:0000305" key="7"/>
<evidence type="ECO:0000305" key="8">
    <source>
    </source>
</evidence>
<feature type="initiator methionine" description="Removed" evidence="1">
    <location>
        <position position="1"/>
    </location>
</feature>
<feature type="chain" id="PRO_0000244866" description="Histone H2B 8">
    <location>
        <begin position="2"/>
        <end position="126"/>
    </location>
</feature>
<feature type="region of interest" description="Disordered" evidence="4">
    <location>
        <begin position="1"/>
        <end position="35"/>
    </location>
</feature>
<feature type="compositionally biased region" description="Low complexity" evidence="4">
    <location>
        <begin position="1"/>
        <end position="12"/>
    </location>
</feature>
<feature type="compositionally biased region" description="Basic residues" evidence="4">
    <location>
        <begin position="13"/>
        <end position="34"/>
    </location>
</feature>
<feature type="modified residue" description="N6-acetyllysine" evidence="6">
    <location>
        <position position="6"/>
    </location>
</feature>
<feature type="modified residue" description="N6-acetyllysine" evidence="6">
    <location>
        <position position="13"/>
    </location>
</feature>
<feature type="modified residue" description="Phosphoserine" evidence="5">
    <location>
        <position position="15"/>
    </location>
</feature>
<feature type="modified residue" description="N6-acetyllysine" evidence="6">
    <location>
        <position position="16"/>
    </location>
</feature>
<feature type="modified residue" description="N6-acetyllysine" evidence="6">
    <location>
        <position position="21"/>
    </location>
</feature>
<feature type="glycosylation site" description="O-linked (GlcNAc) serine" evidence="3">
    <location>
        <position position="113"/>
    </location>
</feature>
<feature type="cross-link" description="Glycyl lysine isopeptide (Lys-Gly) (interchain with G-Cter in ubiquitin)" evidence="8">
    <location>
        <position position="121"/>
    </location>
</feature>
<accession>Q9PSW9</accession>
<organism>
    <name type="scientific">Gallus gallus</name>
    <name type="common">Chicken</name>
    <dbReference type="NCBI Taxonomy" id="9031"/>
    <lineage>
        <taxon>Eukaryota</taxon>
        <taxon>Metazoa</taxon>
        <taxon>Chordata</taxon>
        <taxon>Craniata</taxon>
        <taxon>Vertebrata</taxon>
        <taxon>Euteleostomi</taxon>
        <taxon>Archelosauria</taxon>
        <taxon>Archosauria</taxon>
        <taxon>Dinosauria</taxon>
        <taxon>Saurischia</taxon>
        <taxon>Theropoda</taxon>
        <taxon>Coelurosauria</taxon>
        <taxon>Aves</taxon>
        <taxon>Neognathae</taxon>
        <taxon>Galloanserae</taxon>
        <taxon>Galliformes</taxon>
        <taxon>Phasianidae</taxon>
        <taxon>Phasianinae</taxon>
        <taxon>Gallus</taxon>
    </lineage>
</organism>
<comment type="function">
    <text>Core component of nucleosome. Nucleosomes wrap and compact DNA into chromatin, limiting DNA accessibility to the cellular machineries which require DNA as a template. Histones thereby play a central role in transcription regulation, DNA repair, DNA replication and chromosomal stability. DNA accessibility is regulated via a complex set of post-translational modifications of histones, also called histone code, and nucleosome remodeling.</text>
</comment>
<comment type="subunit">
    <text>The nucleosome is a histone octamer containing two molecules each of H2A, H2B, H3 and H4 assembled in one H3-H4 heterotetramer and two H2A-H2B heterodimers. The octamer wraps approximately 147 bp of DNA.</text>
</comment>
<comment type="subcellular location">
    <subcellularLocation>
        <location>Nucleus</location>
    </subcellularLocation>
    <subcellularLocation>
        <location>Chromosome</location>
    </subcellularLocation>
</comment>
<comment type="PTM">
    <text evidence="2">Monoubiquitination of Lys-121 by the BRE1 gives a specific tag for epigenetic transcriptional activation and is also prerequisite for histone H3 'Lys-4' and 'Lys-79' methylation.</text>
</comment>
<comment type="PTM">
    <text evidence="5">Phosphorylated on Ser-15 during apoptosis; which facilitates apoptotic chromatin condensation.</text>
</comment>
<comment type="PTM">
    <text evidence="3">GlcNAcylation at Ser-113 promotes monoubiquitination of Lys-121. It fluctuates in response to extracellular glucose, and associates with transcribed genes (By similarity).</text>
</comment>
<comment type="similarity">
    <text evidence="7">Belongs to the histone H2B family.</text>
</comment>
<keyword id="KW-0007">Acetylation</keyword>
<keyword id="KW-0158">Chromosome</keyword>
<keyword id="KW-0238">DNA-binding</keyword>
<keyword id="KW-0325">Glycoprotein</keyword>
<keyword id="KW-1017">Isopeptide bond</keyword>
<keyword id="KW-0544">Nucleosome core</keyword>
<keyword id="KW-0539">Nucleus</keyword>
<keyword id="KW-0597">Phosphoprotein</keyword>
<keyword id="KW-1185">Reference proteome</keyword>
<keyword id="KW-0832">Ubl conjugation</keyword>